<accession>P03353</accession>
<evidence type="ECO:0000250" key="1">
    <source>
        <dbReference type="UniProtKB" id="P03345"/>
    </source>
</evidence>
<evidence type="ECO:0000250" key="2">
    <source>
        <dbReference type="UniProtKB" id="P10274"/>
    </source>
</evidence>
<evidence type="ECO:0000255" key="3"/>
<evidence type="ECO:0000255" key="4">
    <source>
        <dbReference type="PROSITE-ProRule" id="PRU00047"/>
    </source>
</evidence>
<evidence type="ECO:0000255" key="5">
    <source>
        <dbReference type="PROSITE-ProRule" id="PRU00275"/>
    </source>
</evidence>
<evidence type="ECO:0000256" key="6">
    <source>
        <dbReference type="SAM" id="MobiDB-lite"/>
    </source>
</evidence>
<evidence type="ECO:0000269" key="7">
    <source>
    </source>
</evidence>
<evidence type="ECO:0000269" key="8">
    <source>
    </source>
</evidence>
<evidence type="ECO:0000269" key="9">
    <source>
    </source>
</evidence>
<evidence type="ECO:0000305" key="10"/>
<name>PRO_HTLV2</name>
<dbReference type="EC" id="3.4.23.-" evidence="5"/>
<dbReference type="EMBL" id="M10060">
    <property type="status" value="NOT_ANNOTATED_CDS"/>
    <property type="molecule type" value="Genomic_DNA"/>
</dbReference>
<dbReference type="PIR" id="A03954">
    <property type="entry name" value="PNLJH2"/>
</dbReference>
<dbReference type="PDB" id="1JVR">
    <property type="method" value="NMR"/>
    <property type="chains" value="A=1-136"/>
</dbReference>
<dbReference type="PDBsum" id="1JVR"/>
<dbReference type="SMR" id="P03353"/>
<dbReference type="MEROPS" id="A02.018"/>
<dbReference type="Proteomes" id="UP000009254">
    <property type="component" value="Genome"/>
</dbReference>
<dbReference type="GO" id="GO:0019013">
    <property type="term" value="C:viral nucleocapsid"/>
    <property type="evidence" value="ECO:0007669"/>
    <property type="project" value="UniProtKB-KW"/>
</dbReference>
<dbReference type="GO" id="GO:0004190">
    <property type="term" value="F:aspartic-type endopeptidase activity"/>
    <property type="evidence" value="ECO:0007669"/>
    <property type="project" value="UniProtKB-KW"/>
</dbReference>
<dbReference type="GO" id="GO:0003676">
    <property type="term" value="F:nucleic acid binding"/>
    <property type="evidence" value="ECO:0007669"/>
    <property type="project" value="InterPro"/>
</dbReference>
<dbReference type="GO" id="GO:0005198">
    <property type="term" value="F:structural molecule activity"/>
    <property type="evidence" value="ECO:0007669"/>
    <property type="project" value="InterPro"/>
</dbReference>
<dbReference type="GO" id="GO:0008270">
    <property type="term" value="F:zinc ion binding"/>
    <property type="evidence" value="ECO:0007669"/>
    <property type="project" value="UniProtKB-KW"/>
</dbReference>
<dbReference type="GO" id="GO:0006508">
    <property type="term" value="P:proteolysis"/>
    <property type="evidence" value="ECO:0007669"/>
    <property type="project" value="UniProtKB-KW"/>
</dbReference>
<dbReference type="GO" id="GO:0039657">
    <property type="term" value="P:symbiont-mediated suppression of host gene expression"/>
    <property type="evidence" value="ECO:0007669"/>
    <property type="project" value="UniProtKB-KW"/>
</dbReference>
<dbReference type="GO" id="GO:0075523">
    <property type="term" value="P:viral translational frameshifting"/>
    <property type="evidence" value="ECO:0007669"/>
    <property type="project" value="UniProtKB-KW"/>
</dbReference>
<dbReference type="Gene3D" id="1.10.1200.30">
    <property type="match status" value="1"/>
</dbReference>
<dbReference type="Gene3D" id="2.40.70.10">
    <property type="entry name" value="Acid Proteases"/>
    <property type="match status" value="1"/>
</dbReference>
<dbReference type="Gene3D" id="1.10.185.10">
    <property type="entry name" value="Delta-retroviral matrix"/>
    <property type="match status" value="1"/>
</dbReference>
<dbReference type="Gene3D" id="1.10.375.10">
    <property type="entry name" value="Human Immunodeficiency Virus Type 1 Capsid Protein"/>
    <property type="match status" value="1"/>
</dbReference>
<dbReference type="Gene3D" id="4.10.60.10">
    <property type="entry name" value="Zinc finger, CCHC-type"/>
    <property type="match status" value="1"/>
</dbReference>
<dbReference type="InterPro" id="IPR001969">
    <property type="entry name" value="Aspartic_peptidase_AS"/>
</dbReference>
<dbReference type="InterPro" id="IPR003139">
    <property type="entry name" value="D_retro_matrix"/>
</dbReference>
<dbReference type="InterPro" id="IPR045345">
    <property type="entry name" value="Gag_p24_C"/>
</dbReference>
<dbReference type="InterPro" id="IPR001995">
    <property type="entry name" value="Peptidase_A2_cat"/>
</dbReference>
<dbReference type="InterPro" id="IPR021109">
    <property type="entry name" value="Peptidase_aspartic_dom_sf"/>
</dbReference>
<dbReference type="InterPro" id="IPR050195">
    <property type="entry name" value="Primate_lentivir_Gag_pol-like"/>
</dbReference>
<dbReference type="InterPro" id="IPR018061">
    <property type="entry name" value="Retropepsins"/>
</dbReference>
<dbReference type="InterPro" id="IPR008916">
    <property type="entry name" value="Retrov_capsid_C"/>
</dbReference>
<dbReference type="InterPro" id="IPR008919">
    <property type="entry name" value="Retrov_capsid_N"/>
</dbReference>
<dbReference type="InterPro" id="IPR010999">
    <property type="entry name" value="Retrovr_matrix"/>
</dbReference>
<dbReference type="InterPro" id="IPR001878">
    <property type="entry name" value="Znf_CCHC"/>
</dbReference>
<dbReference type="InterPro" id="IPR036875">
    <property type="entry name" value="Znf_CCHC_sf"/>
</dbReference>
<dbReference type="PANTHER" id="PTHR40389">
    <property type="entry name" value="ENDOGENOUS RETROVIRUS GROUP K MEMBER 24 GAG POLYPROTEIN-RELATED"/>
    <property type="match status" value="1"/>
</dbReference>
<dbReference type="PANTHER" id="PTHR40389:SF3">
    <property type="entry name" value="IGE-BINDING PROTEIN"/>
    <property type="match status" value="1"/>
</dbReference>
<dbReference type="Pfam" id="PF02228">
    <property type="entry name" value="Gag_p19"/>
    <property type="match status" value="1"/>
</dbReference>
<dbReference type="Pfam" id="PF00607">
    <property type="entry name" value="Gag_p24"/>
    <property type="match status" value="1"/>
</dbReference>
<dbReference type="Pfam" id="PF19317">
    <property type="entry name" value="Gag_p24_C"/>
    <property type="match status" value="1"/>
</dbReference>
<dbReference type="Pfam" id="PF00077">
    <property type="entry name" value="RVP"/>
    <property type="match status" value="1"/>
</dbReference>
<dbReference type="Pfam" id="PF00098">
    <property type="entry name" value="zf-CCHC"/>
    <property type="match status" value="1"/>
</dbReference>
<dbReference type="SMART" id="SM00343">
    <property type="entry name" value="ZnF_C2HC"/>
    <property type="match status" value="2"/>
</dbReference>
<dbReference type="SUPFAM" id="SSF50630">
    <property type="entry name" value="Acid proteases"/>
    <property type="match status" value="1"/>
</dbReference>
<dbReference type="SUPFAM" id="SSF47836">
    <property type="entry name" value="Retroviral matrix proteins"/>
    <property type="match status" value="1"/>
</dbReference>
<dbReference type="SUPFAM" id="SSF47353">
    <property type="entry name" value="Retrovirus capsid dimerization domain-like"/>
    <property type="match status" value="1"/>
</dbReference>
<dbReference type="SUPFAM" id="SSF47943">
    <property type="entry name" value="Retrovirus capsid protein, N-terminal core domain"/>
    <property type="match status" value="1"/>
</dbReference>
<dbReference type="SUPFAM" id="SSF57756">
    <property type="entry name" value="Retrovirus zinc finger-like domains"/>
    <property type="match status" value="1"/>
</dbReference>
<dbReference type="PROSITE" id="PS50175">
    <property type="entry name" value="ASP_PROT_RETROV"/>
    <property type="match status" value="1"/>
</dbReference>
<dbReference type="PROSITE" id="PS00141">
    <property type="entry name" value="ASP_PROTEASE"/>
    <property type="match status" value="1"/>
</dbReference>
<dbReference type="PROSITE" id="PS50158">
    <property type="entry name" value="ZF_CCHC"/>
    <property type="match status" value="1"/>
</dbReference>
<reference key="1">
    <citation type="journal article" date="1985" name="Proc. Natl. Acad. Sci. U.S.A.">
        <title>Complete nucleotide sequence of an infectious clone of human T-cell leukemia virus type II: an open reading frame for the protease gene.</title>
        <authorList>
            <person name="Shimotohno K."/>
            <person name="Takahashi Y."/>
            <person name="Shimizu N."/>
            <person name="Gojobori T."/>
            <person name="Golde D.W."/>
            <person name="Chen I.S.Y."/>
            <person name="Miwa M."/>
            <person name="Sugimura T."/>
        </authorList>
    </citation>
    <scope>NUCLEOTIDE SEQUENCE [GENOMIC DNA]</scope>
</reference>
<reference key="2">
    <citation type="journal article" date="1989" name="J. Virol.">
        <title>Translation of gag, pro, and pol gene products of human T-cell leukemia virus type 2.</title>
        <authorList>
            <person name="Mador N."/>
            <person name="Panet A."/>
            <person name="Honigman A."/>
        </authorList>
    </citation>
    <scope>RIBOSOMAL FRAMESHIFT</scope>
</reference>
<reference key="3">
    <citation type="journal article" date="1993" name="J. Virol.">
        <title>Two cis-acting signals control ribosomal frameshift between human T-cell leukemia virus type II gag and pro genes.</title>
        <authorList>
            <person name="Falk H."/>
            <person name="Mador N."/>
            <person name="Udi R."/>
            <person name="Panet A."/>
            <person name="Honigman A."/>
        </authorList>
    </citation>
    <scope>RIBOSOMAL FRAMESHIFT</scope>
</reference>
<reference key="4">
    <citation type="journal article" date="2001" name="Nucleic Acids Res.">
        <title>Comparative mutational analysis of cis-acting RNA signals for translational frameshifting in HIV-1 and HTLV-2.</title>
        <authorList>
            <person name="Kim Y.-G."/>
            <person name="Maas S."/>
            <person name="Rich A."/>
        </authorList>
    </citation>
    <scope>RIBOSOMAL FRAMESHIFT</scope>
</reference>
<reference key="5">
    <citation type="journal article" date="1996" name="J. Mol. Biol.">
        <title>Three-dimensional structure of the HTLV-II matrix protein and comparative analysis of matrix proteins from the different classes of pathogenic human retroviruses.</title>
        <authorList>
            <person name="Christensen A.M."/>
            <person name="Massiah M.A."/>
            <person name="Turner B.G."/>
            <person name="Sundquist W.I."/>
            <person name="Summers M.F."/>
        </authorList>
    </citation>
    <scope>STRUCTURE BY NMR OF 1-136</scope>
</reference>
<gene>
    <name type="primary">gag-pro</name>
</gene>
<proteinExistence type="evidence at protein level"/>
<comment type="function">
    <molecule>Gag-Pro polyprotein</molecule>
    <text evidence="1">The matrix domain targets Gag, Gag-Pro and Gag-Pro-Pol polyproteins to the plasma membrane via a multipartite membrane binding signal, that includes its myristoylated N-terminus.</text>
</comment>
<comment type="function">
    <molecule>Matrix protein p19</molecule>
    <text evidence="1">Matrix protein.</text>
</comment>
<comment type="function">
    <molecule>Capsid protein p24</molecule>
    <text evidence="2">Forms the spherical core of the virus that encapsulates the genomic RNA-nucleocapsid complex.</text>
</comment>
<comment type="function">
    <molecule>Nucleocapsid protein p15-pro</molecule>
    <text evidence="2">Binds strongly to viral nucleic acids and promote their aggregation. Also destabilizes the nucleic acids duplexes via highly structured zinc-binding motifs.</text>
</comment>
<comment type="function">
    <molecule>Protease</molecule>
    <text evidence="2 5">The aspartyl protease mediates proteolytic cleavages of Gag and Gag-Pol polyproteins during or shortly after the release of the virion from the plasma membrane. Cleavages take place as an ordered, step-wise cascade to yield mature proteins. This process is called maturation. Displays maximal activity during the budding process just prior to particle release from the cell (Potential). Cleaves the translation initiation factor eIF4G leading to the inhibition of host cap-dependent translation (By similarity).</text>
</comment>
<comment type="subunit">
    <molecule>Gag-Pro polyprotein</molecule>
    <text evidence="1">Homodimer; the homodimers are part of the immature particles. Interacts with human TSG101 and NEDD4; these interactions are essential for budding and release of viral particles.</text>
</comment>
<comment type="subunit">
    <molecule>Matrix protein p19</molecule>
    <text evidence="1">Homodimer; further assembles as homohexamers.</text>
</comment>
<comment type="subcellular location">
    <molecule>Matrix protein p19</molecule>
    <subcellularLocation>
        <location evidence="1">Virion</location>
    </subcellularLocation>
</comment>
<comment type="subcellular location">
    <molecule>Capsid protein p24</molecule>
    <subcellularLocation>
        <location evidence="1">Virion</location>
    </subcellularLocation>
</comment>
<comment type="subcellular location">
    <molecule>Nucleocapsid protein p15-pro</molecule>
    <subcellularLocation>
        <location evidence="1">Virion</location>
    </subcellularLocation>
</comment>
<comment type="alternative products">
    <event type="ribosomal frameshifting"/>
    <isoform>
        <id>P03353-1</id>
        <name>Gag-Pro polyprotein</name>
        <sequence type="displayed"/>
    </isoform>
    <isoform>
        <id>P03346-1</id>
        <name>Gag polyprotein</name>
        <sequence type="external"/>
    </isoform>
    <isoform>
        <id>P03363-1</id>
        <name>Gag-Pro-Pol polyprotein</name>
        <sequence type="external"/>
    </isoform>
    <text evidence="10">This strategy of translation probably allows the virus to modulate the quantity of each viral protein.</text>
</comment>
<comment type="domain">
    <molecule>Capsid protein p24</molecule>
    <text evidence="2">The capsid protein N-terminus seems to be involved in Gag-Gag interactions.</text>
</comment>
<comment type="domain">
    <molecule>Gag-Pro polyprotein</molecule>
    <text evidence="1">Late-budding domains (L domains) are short sequence motifs essential for viral particle release. They can occur individually or in close proximity within structural proteins. They interacts with sorting cellular proteins of the multivesicular body (MVB) pathway. Most of these proteins are class E vacuolar protein sorting factors belonging to ESCRT-I, ESCRT-II or ESCRT-III complexes. Matrix protein p19 contains two L domains: a PTAP/PSAP motif which interacts with the UEV domain of TSG101, and a PPXY motif which binds to the WW domains of the ubiquitin ligase NEDD4.</text>
</comment>
<comment type="PTM">
    <molecule>Gag-Pro polyprotein</molecule>
    <text evidence="2">Specific enzymatic cleavages by the viral protease yield mature proteins. The polyprotein is cleaved during and after budding, this process is termed maturation. The protease is autoproteolytically processed at its N- and C-termini.</text>
</comment>
<comment type="PTM">
    <molecule>Matrix protein p19</molecule>
    <text evidence="1">Phosphorylation of the matrix protein p19 by MAPK1 seems to play a role in budding.</text>
</comment>
<comment type="PTM">
    <molecule>Gag-Pro polyprotein</molecule>
    <text evidence="1">Myristoylated. Myristoylation of the matrix (MA) domain mediates the transport and binding of Gag polyproteins to the host plasma membrane and is required for the assembly of viral particles.</text>
</comment>
<comment type="miscellaneous">
    <text evidence="10">HTLV-1 lineages are divided in four clades, A (Cosmopolitan), B (Central African group), C (Melanesian group) and D (New Central African group).</text>
</comment>
<comment type="miscellaneous">
    <molecule>Isoform Gag-Pro polyprotein</molecule>
    <text evidence="7 8 9">Produced by -1 ribosomal frameshifting at the gag-pro genes boundary.</text>
</comment>
<sequence>MGQIHGLSPTPIPKAPRGLSTHHWLNFLQAAYRLQPRPSDFDFQQLRRFLKLALKTPIWLNPIDYSLLASLIPKGYPGRVVEIINILVKNQVSPSAPAAPVPTPICPTTTPPPPPPPSPEAHVPPPYVEPTTTQCFPILHPPGAPSAHRPWQMKDLQAIKQEVSSSALGSPQFMQTLRLAVQQFDPTAKDLQDLLQYLCSSLVVSLHHQQLNTLITEAETRGMTGYNPMAGPLRMQANNPAQQGLRREYQNLWLAAFSTLPGNTRDPSWAAILQGLEEPYCAFVERLNVALDNGLPEGTPKEPILRSLAYSNANKECQKILQARGHTNSPLGEMLRTCQAWTPKDKTKVLVVQPRRPPPTQPCFRCGKVGHWSRDCTQPRPPPGPCPLCQDPSHWKRDCPQLKPPQEEGEPLLLDLPSTSGTTEEKNLLKGGDLISPHPDQDISILPLIPLRQQQQPILGVRISVMGQTPQPTQALLDTGADLTVIPQTLVPGPVKLHDTLILGASGQTNTQFKLLQTPLHIFLPFRRSPVILSSCLLDTHNKWTIIGRDALQQCQGLLYLPDDPSPHQLLPIATPNTIGLEHLPPPPQVDQFPLNLSASRP</sequence>
<organismHost>
    <name type="scientific">Homo sapiens</name>
    <name type="common">Human</name>
    <dbReference type="NCBI Taxonomy" id="9606"/>
</organismHost>
<protein>
    <recommendedName>
        <fullName>Gag-Pro polyprotein</fullName>
    </recommendedName>
    <alternativeName>
        <fullName>Pr76Gag-Pro</fullName>
    </alternativeName>
    <component>
        <recommendedName>
            <fullName>Matrix protein p19</fullName>
            <shortName>MA</shortName>
        </recommendedName>
    </component>
    <component>
        <recommendedName>
            <fullName>Capsid protein p24</fullName>
            <shortName>CA</shortName>
        </recommendedName>
    </component>
    <component>
        <recommendedName>
            <fullName>Nucleocapsid protein p15-pro</fullName>
            <shortName>NC'</shortName>
            <shortName>NC-pro</shortName>
        </recommendedName>
    </component>
    <component>
        <recommendedName>
            <fullName>Protease</fullName>
            <shortName>PR</shortName>
            <ecNumber evidence="5">3.4.23.-</ecNumber>
        </recommendedName>
    </component>
    <component>
        <recommendedName>
            <fullName>p1</fullName>
        </recommendedName>
    </component>
    <component>
        <recommendedName>
            <fullName>Transframe peptide</fullName>
            <shortName>TFP</shortName>
        </recommendedName>
        <alternativeName>
            <fullName>p8</fullName>
        </alternativeName>
    </component>
</protein>
<organism>
    <name type="scientific">Human T-cell leukemia virus 2</name>
    <name type="common">HTLV-2</name>
    <dbReference type="NCBI Taxonomy" id="11909"/>
    <lineage>
        <taxon>Viruses</taxon>
        <taxon>Riboviria</taxon>
        <taxon>Pararnavirae</taxon>
        <taxon>Artverviricota</taxon>
        <taxon>Revtraviricetes</taxon>
        <taxon>Ortervirales</taxon>
        <taxon>Retroviridae</taxon>
        <taxon>Orthoretrovirinae</taxon>
        <taxon>Deltaretrovirus</taxon>
        <taxon>Primate T-lymphotropic virus 2</taxon>
    </lineage>
</organism>
<keyword id="KW-0002">3D-structure</keyword>
<keyword id="KW-0064">Aspartyl protease</keyword>
<keyword id="KW-0167">Capsid protein</keyword>
<keyword id="KW-1262">Eukaryotic host gene expression shutoff by virus</keyword>
<keyword id="KW-1193">Eukaryotic host translation shutoff by virus</keyword>
<keyword id="KW-1190">Host gene expression shutoff by virus</keyword>
<keyword id="KW-0945">Host-virus interaction</keyword>
<keyword id="KW-0378">Hydrolase</keyword>
<keyword id="KW-0449">Lipoprotein</keyword>
<keyword id="KW-0479">Metal-binding</keyword>
<keyword id="KW-0519">Myristate</keyword>
<keyword id="KW-0645">Protease</keyword>
<keyword id="KW-1185">Reference proteome</keyword>
<keyword id="KW-0677">Repeat</keyword>
<keyword id="KW-0688">Ribosomal frameshifting</keyword>
<keyword id="KW-0543">Viral nucleoprotein</keyword>
<keyword id="KW-0946">Virion</keyword>
<keyword id="KW-0862">Zinc</keyword>
<keyword id="KW-0863">Zinc-finger</keyword>
<feature type="initiator methionine" description="Removed; by host" evidence="3">
    <location>
        <position position="1"/>
    </location>
</feature>
<feature type="chain" id="PRO_0000259809" description="Gag-Pro polyprotein">
    <location>
        <begin position="2"/>
        <end position="602"/>
    </location>
</feature>
<feature type="chain" id="PRO_0000259810" description="Matrix protein p19">
    <location>
        <begin position="2"/>
        <end position="136"/>
    </location>
</feature>
<feature type="chain" id="PRO_0000259811" description="Capsid protein p24">
    <location>
        <begin position="137"/>
        <end position="350"/>
    </location>
</feature>
<feature type="chain" id="PRO_0000259812" description="Nucleocapsid protein p15-pro">
    <location>
        <begin position="351"/>
        <end position="446"/>
    </location>
</feature>
<feature type="chain" id="PRO_0000199535" description="Protease">
    <location>
        <begin position="447"/>
        <end position="571"/>
    </location>
</feature>
<feature type="peptide" id="PRO_0000259813" description="p1">
    <location>
        <begin position="572"/>
        <end position="579"/>
    </location>
</feature>
<feature type="chain" id="PRO_0000259814" description="Transframe peptide">
    <location>
        <begin position="580"/>
        <end position="602"/>
    </location>
</feature>
<feature type="domain" description="Peptidase A2" evidence="5">
    <location>
        <begin position="473"/>
        <end position="551"/>
    </location>
</feature>
<feature type="zinc finger region" description="CCHC-type 1" evidence="4">
    <location>
        <begin position="361"/>
        <end position="378"/>
    </location>
</feature>
<feature type="zinc finger region" description="CCHC-type 2" evidence="4">
    <location>
        <begin position="384"/>
        <end position="401"/>
    </location>
</feature>
<feature type="region of interest" description="Disordered" evidence="6">
    <location>
        <begin position="94"/>
        <end position="121"/>
    </location>
</feature>
<feature type="region of interest" description="Disordered" evidence="6">
    <location>
        <begin position="399"/>
        <end position="425"/>
    </location>
</feature>
<feature type="region of interest" description="Disordered" evidence="6">
    <location>
        <begin position="582"/>
        <end position="602"/>
    </location>
</feature>
<feature type="short sequence motif" description="PTAP/PSAP motif" evidence="1">
    <location>
        <begin position="94"/>
        <end position="97"/>
    </location>
</feature>
<feature type="short sequence motif" description="PPXY motif" evidence="1">
    <location>
        <begin position="124"/>
        <end position="127"/>
    </location>
</feature>
<feature type="compositionally biased region" description="Pro residues" evidence="6">
    <location>
        <begin position="97"/>
        <end position="121"/>
    </location>
</feature>
<feature type="active site" description="Protease; shared with dimeric partner" evidence="5">
    <location>
        <position position="478"/>
    </location>
</feature>
<feature type="site" description="Cleavage; by viral protease" evidence="2">
    <location>
        <begin position="136"/>
        <end position="137"/>
    </location>
</feature>
<feature type="site" description="Cleavage; by viral protease" evidence="2">
    <location>
        <begin position="350"/>
        <end position="351"/>
    </location>
</feature>
<feature type="site" description="Cleavage; by viral protease" evidence="2">
    <location>
        <begin position="446"/>
        <end position="447"/>
    </location>
</feature>
<feature type="site" description="Cleavage; by viral protease" evidence="2">
    <location>
        <begin position="571"/>
        <end position="572"/>
    </location>
</feature>
<feature type="site" description="Cleavage; by viral protease" evidence="2">
    <location>
        <begin position="579"/>
        <end position="580"/>
    </location>
</feature>
<feature type="lipid moiety-binding region" description="N-myristoyl glycine; by host" evidence="3">
    <location>
        <position position="2"/>
    </location>
</feature>